<evidence type="ECO:0000256" key="1">
    <source>
        <dbReference type="SAM" id="MobiDB-lite"/>
    </source>
</evidence>
<evidence type="ECO:0000305" key="2"/>
<sequence>YNHSHIHTQYFVTYVSFLLLFTSTSLNSPYLSSPVISTGQHIDVGDEDYHDGDDDVDYTDDVDDVDDPHGSPSQLLQGGYQRNRHYGGGTYHSGYYRPNKQHGNGYGGQYPKKYGSGYKH</sequence>
<feature type="chain" id="PRO_0000084543" description="Immunogenic miracidial antigen 5D">
    <location>
        <begin position="1" status="less than"/>
        <end position="120"/>
    </location>
</feature>
<feature type="region of interest" description="Disordered" evidence="1">
    <location>
        <begin position="41"/>
        <end position="120"/>
    </location>
</feature>
<feature type="compositionally biased region" description="Acidic residues" evidence="1">
    <location>
        <begin position="45"/>
        <end position="66"/>
    </location>
</feature>
<feature type="non-terminal residue">
    <location>
        <position position="1"/>
    </location>
</feature>
<reference key="1">
    <citation type="journal article" date="1989" name="Mol. Biochem. Parasitol.">
        <title>Characterization of a large gene family in Schistosoma japonicum that encodes an immunogenic miracidial antigen.</title>
        <authorList>
            <person name="Scallon B.J."/>
            <person name="Bogitsh B.J."/>
            <person name="Carter C.E."/>
        </authorList>
    </citation>
    <scope>NUCLEOTIDE SEQUENCE [GENOMIC DNA]</scope>
    <source>
        <strain>Philippines</strain>
    </source>
</reference>
<comment type="developmental stage">
    <text>Miracidia.</text>
</comment>
<comment type="similarity">
    <text evidence="2">Belongs to the immunogenic miracidial antigen family.</text>
</comment>
<organism>
    <name type="scientific">Schistosoma japonicum</name>
    <name type="common">Blood fluke</name>
    <dbReference type="NCBI Taxonomy" id="6182"/>
    <lineage>
        <taxon>Eukaryota</taxon>
        <taxon>Metazoa</taxon>
        <taxon>Spiralia</taxon>
        <taxon>Lophotrochozoa</taxon>
        <taxon>Platyhelminthes</taxon>
        <taxon>Trematoda</taxon>
        <taxon>Digenea</taxon>
        <taxon>Strigeidida</taxon>
        <taxon>Schistosomatoidea</taxon>
        <taxon>Schistosomatidae</taxon>
        <taxon>Schistosoma</taxon>
    </lineage>
</organism>
<gene>
    <name type="primary">5D</name>
</gene>
<dbReference type="EMBL" id="M25214">
    <property type="protein sequence ID" value="AAA29851.1"/>
    <property type="molecule type" value="Genomic_DNA"/>
</dbReference>
<dbReference type="InterPro" id="IPR026240">
    <property type="entry name" value="Miracidia_Ag_8I"/>
</dbReference>
<dbReference type="PRINTS" id="PR02101">
    <property type="entry name" value="A8IMIRACIDIA"/>
</dbReference>
<protein>
    <recommendedName>
        <fullName>Immunogenic miracidial antigen 5D</fullName>
    </recommendedName>
</protein>
<accession>P13411</accession>
<name>MA5D_SCHJA</name>
<proteinExistence type="evidence at transcript level"/>